<comment type="function">
    <text evidence="3 5 6 7">V region of the variable domain of T cell receptor (TR) beta chain that participates in the antigen recognition (PubMed:24600447). Alpha-beta T cell receptors are antigen specific receptors which are essential to the immune response and are present on the cell surface of T lymphocytes. Recognize peptide-major histocompatibility (MH) (pMH) complexes that are displayed by antigen presenting cells (APC), a prerequisite for efficient T cell adaptive immunity against pathogens (PubMed:25493333). Binding of alpha-beta TR to pMH complex initiates TR-CD3 clustering on the cell surface and intracellular activation of LCK that phosphorylates the ITAM motifs of CD3G, CD3D, CD3E and CD247 enabling the recruitment of ZAP70. In turn ZAP70 phosphorylates LAT, which recruits numerous signaling molecules to form the LAT signalosome. The LAT signalosome propagates signal branching to three major signaling pathways, the calcium, the mitogen-activated protein kinase (MAPK) kinase and the nuclear factor NF-kappa-B (NF-kB) pathways, leading to the mobilization of transcription factors that are critical for gene expression and essential for T cell growth and differentiation (PubMed:23524462). The T cell repertoire is generated in the thymus, by V-(D)-J rearrangement. This repertoire is then shaped by intrathymic selection events to generate a peripheral T cell pool of self-MH restricted, non-autoaggressive T cells. Post-thymic interaction of alpha-beta TR with the pMH complexes shapes TR structural and functional avidity (PubMed:15040585).</text>
</comment>
<comment type="subunit">
    <text evidence="4">Alpha-beta TR is a heterodimer composed of an alpha and beta chain; disulfide-linked. The alpha-beta TR is associated with the transmembrane signaling CD3 coreceptor proteins to form the TR-CD3 (TcR or TCR). The assembly of alpha-beta TR heterodimers with CD3 occurs in the endoplasmic reticulum where a single alpha-beta TR heterodimer associates with one CD3D-CD3E heterodimer, one CD3G-CD3E heterodimer and one CD247 homodimer forming a stable octameric structure. CD3D-CD3E and CD3G-CD3E heterodimers preferentially associate with TR alpha and TR beta chains, respectively. The association of the CD247 homodimer is the last step of TcR assembly in the endoplasmic reticulum and is required for transport to the cell surface.</text>
</comment>
<comment type="subcellular location">
    <subcellularLocation>
        <location evidence="4">Cell membrane</location>
    </subcellularLocation>
</comment>
<comment type="polymorphism">
    <text evidence="9">There are several alleles. The sequence shown is that of IMGT allele TRBV7-8*01.</text>
</comment>
<proteinExistence type="inferred from homology"/>
<dbReference type="EMBL" id="AC233282">
    <property type="status" value="NOT_ANNOTATED_CDS"/>
    <property type="molecule type" value="Genomic_DNA"/>
</dbReference>
<dbReference type="SMR" id="A0A1B0GX51"/>
<dbReference type="FunCoup" id="A0A1B0GX51">
    <property type="interactions" value="861"/>
</dbReference>
<dbReference type="IMGT_GENE-DB" id="TRBV7-8"/>
<dbReference type="BioMuta" id="ENSG00000282040"/>
<dbReference type="PeptideAtlas" id="A0A1B0GX51"/>
<dbReference type="AGR" id="HGNC:12242"/>
<dbReference type="GeneCards" id="TRBV7-8"/>
<dbReference type="HGNC" id="HGNC:12242">
    <property type="gene designation" value="TRBV7-8"/>
</dbReference>
<dbReference type="neXtProt" id="NX_A0A1B0GX51"/>
<dbReference type="InParanoid" id="A0A1B0GX51"/>
<dbReference type="PAN-GO" id="A0A1B0GX51">
    <property type="GO annotations" value="2 GO annotations based on evolutionary models"/>
</dbReference>
<dbReference type="Pharos" id="A0A1B0GX51">
    <property type="development level" value="Tdark"/>
</dbReference>
<dbReference type="PRO" id="PR:A0A1B0GX51"/>
<dbReference type="Proteomes" id="UP000005640">
    <property type="component" value="Unplaced"/>
</dbReference>
<dbReference type="RNAct" id="A0A1B0GX51">
    <property type="molecule type" value="protein"/>
</dbReference>
<dbReference type="GO" id="GO:0005886">
    <property type="term" value="C:plasma membrane"/>
    <property type="evidence" value="ECO:0000318"/>
    <property type="project" value="GO_Central"/>
</dbReference>
<dbReference type="GO" id="GO:0042101">
    <property type="term" value="C:T cell receptor complex"/>
    <property type="evidence" value="ECO:0007669"/>
    <property type="project" value="UniProtKB-KW"/>
</dbReference>
<dbReference type="GO" id="GO:0002250">
    <property type="term" value="P:adaptive immune response"/>
    <property type="evidence" value="ECO:0007669"/>
    <property type="project" value="UniProtKB-KW"/>
</dbReference>
<dbReference type="GO" id="GO:0007166">
    <property type="term" value="P:cell surface receptor signaling pathway"/>
    <property type="evidence" value="ECO:0000318"/>
    <property type="project" value="GO_Central"/>
</dbReference>
<dbReference type="CDD" id="cd05899">
    <property type="entry name" value="IgV_TCR_beta"/>
    <property type="match status" value="1"/>
</dbReference>
<dbReference type="FunFam" id="2.60.40.10:FF:002491">
    <property type="entry name" value="T cell receptor beta variable 12-4"/>
    <property type="match status" value="1"/>
</dbReference>
<dbReference type="Gene3D" id="2.60.40.10">
    <property type="entry name" value="Immunoglobulins"/>
    <property type="match status" value="1"/>
</dbReference>
<dbReference type="InterPro" id="IPR007110">
    <property type="entry name" value="Ig-like_dom"/>
</dbReference>
<dbReference type="InterPro" id="IPR036179">
    <property type="entry name" value="Ig-like_dom_sf"/>
</dbReference>
<dbReference type="InterPro" id="IPR013783">
    <property type="entry name" value="Ig-like_fold"/>
</dbReference>
<dbReference type="InterPro" id="IPR013106">
    <property type="entry name" value="Ig_V-set"/>
</dbReference>
<dbReference type="InterPro" id="IPR050413">
    <property type="entry name" value="TCR_beta_variable"/>
</dbReference>
<dbReference type="PANTHER" id="PTHR23268:SF20">
    <property type="entry name" value="T CELL RECEPTOR BETA VARIABLE 7-4-RELATED"/>
    <property type="match status" value="1"/>
</dbReference>
<dbReference type="PANTHER" id="PTHR23268">
    <property type="entry name" value="T-CELL RECEPTOR BETA CHAIN"/>
    <property type="match status" value="1"/>
</dbReference>
<dbReference type="Pfam" id="PF07686">
    <property type="entry name" value="V-set"/>
    <property type="match status" value="1"/>
</dbReference>
<dbReference type="SMART" id="SM00406">
    <property type="entry name" value="IGv"/>
    <property type="match status" value="1"/>
</dbReference>
<dbReference type="SUPFAM" id="SSF48726">
    <property type="entry name" value="Immunoglobulin"/>
    <property type="match status" value="1"/>
</dbReference>
<dbReference type="PROSITE" id="PS50835">
    <property type="entry name" value="IG_LIKE"/>
    <property type="match status" value="1"/>
</dbReference>
<gene>
    <name evidence="8" type="primary">TRBV7-8</name>
</gene>
<feature type="signal peptide" evidence="1">
    <location>
        <begin position="1"/>
        <end position="21"/>
    </location>
</feature>
<feature type="chain" id="PRO_5008408716" description="T cell receptor beta variable 7-8" evidence="1">
    <location>
        <begin position="22"/>
        <end position="115"/>
    </location>
</feature>
<feature type="domain" description="Ig-like" evidence="2">
    <location>
        <begin position="22"/>
        <end position="115" status="greater than"/>
    </location>
</feature>
<feature type="disulfide bond" evidence="2">
    <location>
        <begin position="42"/>
        <end position="111"/>
    </location>
</feature>
<feature type="non-terminal residue">
    <location>
        <position position="115"/>
    </location>
</feature>
<organism>
    <name type="scientific">Homo sapiens</name>
    <name type="common">Human</name>
    <dbReference type="NCBI Taxonomy" id="9606"/>
    <lineage>
        <taxon>Eukaryota</taxon>
        <taxon>Metazoa</taxon>
        <taxon>Chordata</taxon>
        <taxon>Craniata</taxon>
        <taxon>Vertebrata</taxon>
        <taxon>Euteleostomi</taxon>
        <taxon>Mammalia</taxon>
        <taxon>Eutheria</taxon>
        <taxon>Euarchontoglires</taxon>
        <taxon>Primates</taxon>
        <taxon>Haplorrhini</taxon>
        <taxon>Catarrhini</taxon>
        <taxon>Hominidae</taxon>
        <taxon>Homo</taxon>
    </lineage>
</organism>
<sequence length="115" mass="12715">MGTRLLCWVVLGFLGTDHTGAGVSQSPRYKVAKRGQDVALRCDPISGHVSLFWYQQALGQGPEFLTYFQNEAQLDKSGLPSDRFFAERPEGSVSTLKIQRTQQEDSAVYLCASSL</sequence>
<name>TVB78_HUMAN</name>
<accession>A0A1B0GX51</accession>
<keyword id="KW-1064">Adaptive immunity</keyword>
<keyword id="KW-1003">Cell membrane</keyword>
<keyword id="KW-1015">Disulfide bond</keyword>
<keyword id="KW-0391">Immunity</keyword>
<keyword id="KW-0393">Immunoglobulin domain</keyword>
<keyword id="KW-0472">Membrane</keyword>
<keyword id="KW-0675">Receptor</keyword>
<keyword id="KW-1185">Reference proteome</keyword>
<keyword id="KW-0732">Signal</keyword>
<keyword id="KW-1279">T cell receptor</keyword>
<reference key="1">
    <citation type="journal article" date="2003" name="Nature">
        <title>The DNA sequence of human chromosome 7.</title>
        <authorList>
            <person name="Hillier L.W."/>
            <person name="Fulton R.S."/>
            <person name="Fulton L.A."/>
            <person name="Graves T.A."/>
            <person name="Pepin K.H."/>
            <person name="Wagner-McPherson C."/>
            <person name="Layman D."/>
            <person name="Maas J."/>
            <person name="Jaeger S."/>
            <person name="Walker R."/>
            <person name="Wylie K."/>
            <person name="Sekhon M."/>
            <person name="Becker M.C."/>
            <person name="O'Laughlin M.D."/>
            <person name="Schaller M.E."/>
            <person name="Fewell G.A."/>
            <person name="Delehaunty K.D."/>
            <person name="Miner T.L."/>
            <person name="Nash W.E."/>
            <person name="Cordes M."/>
            <person name="Du H."/>
            <person name="Sun H."/>
            <person name="Edwards J."/>
            <person name="Bradshaw-Cordum H."/>
            <person name="Ali J."/>
            <person name="Andrews S."/>
            <person name="Isak A."/>
            <person name="Vanbrunt A."/>
            <person name="Nguyen C."/>
            <person name="Du F."/>
            <person name="Lamar B."/>
            <person name="Courtney L."/>
            <person name="Kalicki J."/>
            <person name="Ozersky P."/>
            <person name="Bielicki L."/>
            <person name="Scott K."/>
            <person name="Holmes A."/>
            <person name="Harkins R."/>
            <person name="Harris A."/>
            <person name="Strong C.M."/>
            <person name="Hou S."/>
            <person name="Tomlinson C."/>
            <person name="Dauphin-Kohlberg S."/>
            <person name="Kozlowicz-Reilly A."/>
            <person name="Leonard S."/>
            <person name="Rohlfing T."/>
            <person name="Rock S.M."/>
            <person name="Tin-Wollam A.-M."/>
            <person name="Abbott A."/>
            <person name="Minx P."/>
            <person name="Maupin R."/>
            <person name="Strowmatt C."/>
            <person name="Latreille P."/>
            <person name="Miller N."/>
            <person name="Johnson D."/>
            <person name="Murray J."/>
            <person name="Woessner J.P."/>
            <person name="Wendl M.C."/>
            <person name="Yang S.-P."/>
            <person name="Schultz B.R."/>
            <person name="Wallis J.W."/>
            <person name="Spieth J."/>
            <person name="Bieri T.A."/>
            <person name="Nelson J.O."/>
            <person name="Berkowicz N."/>
            <person name="Wohldmann P.E."/>
            <person name="Cook L.L."/>
            <person name="Hickenbotham M.T."/>
            <person name="Eldred J."/>
            <person name="Williams D."/>
            <person name="Bedell J.A."/>
            <person name="Mardis E.R."/>
            <person name="Clifton S.W."/>
            <person name="Chissoe S.L."/>
            <person name="Marra M.A."/>
            <person name="Raymond C."/>
            <person name="Haugen E."/>
            <person name="Gillett W."/>
            <person name="Zhou Y."/>
            <person name="James R."/>
            <person name="Phelps K."/>
            <person name="Iadanoto S."/>
            <person name="Bubb K."/>
            <person name="Simms E."/>
            <person name="Levy R."/>
            <person name="Clendenning J."/>
            <person name="Kaul R."/>
            <person name="Kent W.J."/>
            <person name="Furey T.S."/>
            <person name="Baertsch R.A."/>
            <person name="Brent M.R."/>
            <person name="Keibler E."/>
            <person name="Flicek P."/>
            <person name="Bork P."/>
            <person name="Suyama M."/>
            <person name="Bailey J.A."/>
            <person name="Portnoy M.E."/>
            <person name="Torrents D."/>
            <person name="Chinwalla A.T."/>
            <person name="Gish W.R."/>
            <person name="Eddy S.R."/>
            <person name="McPherson J.D."/>
            <person name="Olson M.V."/>
            <person name="Eichler E.E."/>
            <person name="Green E.D."/>
            <person name="Waterston R.H."/>
            <person name="Wilson R.K."/>
        </authorList>
    </citation>
    <scope>NUCLEOTIDE SEQUENCE [LARGE SCALE GENOMIC DNA] (IMGT ALLELE TRBV7-8*01)</scope>
</reference>
<reference key="2">
    <citation type="book" date="2001" name="The T Cell Receptor FactsBook.">
        <title>The T Cell Receptor FactsBook.</title>
        <editorList>
            <person name="Lefranc M.P."/>
            <person name="Lefranc G."/>
        </editorList>
        <authorList>
            <person name="Lefranc M.P."/>
            <person name="Lefranc G."/>
        </authorList>
    </citation>
    <scope>NOMENCLATURE</scope>
</reference>
<reference key="3">
    <citation type="journal article" date="2004" name="Nat. Rev. Immunol.">
        <title>The many important facets of T-cell repertoire diversity.</title>
        <authorList>
            <person name="Nikolich-Zugich J."/>
            <person name="Slifka M.K."/>
            <person name="Messaoudi I."/>
        </authorList>
    </citation>
    <scope>REVIEW ON T CELL REPERTOIRE DIVERSITY</scope>
</reference>
<reference key="4">
    <citation type="journal article" date="2010" name="Cold Spring Harb. Perspect. Biol.">
        <title>Structural biology of the T-cell receptor: insights into receptor assembly, ligand recognition, and initiation of signaling.</title>
        <authorList>
            <person name="Wucherpfennig K.W."/>
            <person name="Gagnon E."/>
            <person name="Call M.J."/>
            <person name="Huseby E.S."/>
            <person name="Call M.E."/>
        </authorList>
    </citation>
    <scope>REVIEW ON T CELL RECEPTOR-CD3 COMPLEX ASSEMBLY</scope>
    <scope>SUBCELLULAR LOCATION</scope>
</reference>
<reference key="5">
    <citation type="journal article" date="2013" name="Nat. Rev. Immunol.">
        <title>T cell receptor signalling networks: branched, diversified and bounded.</title>
        <authorList>
            <person name="Brownlie R.J."/>
            <person name="Zamoyska R."/>
        </authorList>
    </citation>
    <scope>REVIEW ON T CELL RECEPTOR SIGNALING</scope>
</reference>
<reference key="6">
    <citation type="journal article" date="2014" name="Front. Immunol.">
        <title>Immunoglobulin and T Cell Receptor Genes: IMGT((R)) and the Birth and Rise of Immunoinformatics.</title>
        <authorList>
            <person name="Lefranc M.P."/>
        </authorList>
    </citation>
    <scope>NOMENCLATURE</scope>
</reference>
<reference key="7">
    <citation type="journal article" date="2015" name="Annu. Rev. Immunol.">
        <title>T cell antigen receptor recognition of antigen-presenting molecules.</title>
        <authorList>
            <person name="Rossjohn J."/>
            <person name="Gras S."/>
            <person name="Miles J.J."/>
            <person name="Turner S.J."/>
            <person name="Godfrey D.I."/>
            <person name="McCluskey J."/>
        </authorList>
    </citation>
    <scope>REVIEW ON FUNCTION</scope>
</reference>
<protein>
    <recommendedName>
        <fullName evidence="8">T cell receptor beta variable 7-8</fullName>
    </recommendedName>
</protein>
<evidence type="ECO:0000255" key="1"/>
<evidence type="ECO:0000255" key="2">
    <source>
        <dbReference type="PROSITE-ProRule" id="PRU00114"/>
    </source>
</evidence>
<evidence type="ECO:0000303" key="3">
    <source>
    </source>
</evidence>
<evidence type="ECO:0000303" key="4">
    <source>
    </source>
</evidence>
<evidence type="ECO:0000303" key="5">
    <source>
    </source>
</evidence>
<evidence type="ECO:0000303" key="6">
    <source>
    </source>
</evidence>
<evidence type="ECO:0000303" key="7">
    <source>
    </source>
</evidence>
<evidence type="ECO:0000303" key="8">
    <source ref="2"/>
</evidence>
<evidence type="ECO:0000305" key="9"/>